<feature type="chain" id="PRO_0000183641" description="Cytochrome c oxidase subunit 2">
    <location>
        <begin position="1"/>
        <end position="227"/>
    </location>
</feature>
<feature type="topological domain" description="Mitochondrial intermembrane" evidence="4">
    <location>
        <begin position="1"/>
        <end position="14"/>
    </location>
</feature>
<feature type="transmembrane region" description="Helical; Name=I" evidence="4">
    <location>
        <begin position="15"/>
        <end position="45"/>
    </location>
</feature>
<feature type="topological domain" description="Mitochondrial matrix" evidence="4">
    <location>
        <begin position="46"/>
        <end position="59"/>
    </location>
</feature>
<feature type="transmembrane region" description="Helical; Name=II" evidence="4">
    <location>
        <begin position="60"/>
        <end position="87"/>
    </location>
</feature>
<feature type="topological domain" description="Mitochondrial intermembrane" evidence="4">
    <location>
        <begin position="88"/>
        <end position="227"/>
    </location>
</feature>
<feature type="binding site" evidence="4">
    <location>
        <position position="161"/>
    </location>
    <ligand>
        <name>Cu cation</name>
        <dbReference type="ChEBI" id="CHEBI:23378"/>
        <label>A1</label>
    </ligand>
</feature>
<feature type="binding site" evidence="4">
    <location>
        <position position="196"/>
    </location>
    <ligand>
        <name>Cu cation</name>
        <dbReference type="ChEBI" id="CHEBI:23378"/>
        <label>A1</label>
    </ligand>
</feature>
<feature type="binding site" evidence="4">
    <location>
        <position position="196"/>
    </location>
    <ligand>
        <name>Cu cation</name>
        <dbReference type="ChEBI" id="CHEBI:23378"/>
        <label>A2</label>
    </ligand>
</feature>
<feature type="binding site" evidence="4">
    <location>
        <position position="198"/>
    </location>
    <ligand>
        <name>Cu cation</name>
        <dbReference type="ChEBI" id="CHEBI:23378"/>
        <label>A2</label>
    </ligand>
</feature>
<feature type="binding site" evidence="4">
    <location>
        <position position="198"/>
    </location>
    <ligand>
        <name>Mg(2+)</name>
        <dbReference type="ChEBI" id="CHEBI:18420"/>
        <note>ligand shared with MT-CO1</note>
    </ligand>
</feature>
<feature type="binding site" evidence="4">
    <location>
        <position position="200"/>
    </location>
    <ligand>
        <name>Cu cation</name>
        <dbReference type="ChEBI" id="CHEBI:23378"/>
        <label>A1</label>
    </ligand>
</feature>
<feature type="binding site" evidence="4">
    <location>
        <position position="200"/>
    </location>
    <ligand>
        <name>Cu cation</name>
        <dbReference type="ChEBI" id="CHEBI:23378"/>
        <label>A2</label>
    </ligand>
</feature>
<feature type="binding site" evidence="4">
    <location>
        <position position="204"/>
    </location>
    <ligand>
        <name>Cu cation</name>
        <dbReference type="ChEBI" id="CHEBI:23378"/>
        <label>A2</label>
    </ligand>
</feature>
<feature type="binding site" evidence="4">
    <location>
        <position position="207"/>
    </location>
    <ligand>
        <name>Cu cation</name>
        <dbReference type="ChEBI" id="CHEBI:23378"/>
        <label>A1</label>
    </ligand>
</feature>
<feature type="modified residue" description="Phosphotyrosine" evidence="2">
    <location>
        <position position="218"/>
    </location>
</feature>
<dbReference type="EC" id="7.1.1.9"/>
<dbReference type="EMBL" id="AF028221">
    <property type="protein sequence ID" value="AAC00114.1"/>
    <property type="molecule type" value="Genomic_DNA"/>
</dbReference>
<dbReference type="SMR" id="O47675"/>
<dbReference type="GO" id="GO:0005743">
    <property type="term" value="C:mitochondrial inner membrane"/>
    <property type="evidence" value="ECO:0007669"/>
    <property type="project" value="UniProtKB-SubCell"/>
</dbReference>
<dbReference type="GO" id="GO:0045277">
    <property type="term" value="C:respiratory chain complex IV"/>
    <property type="evidence" value="ECO:0000250"/>
    <property type="project" value="UniProtKB"/>
</dbReference>
<dbReference type="GO" id="GO:0005507">
    <property type="term" value="F:copper ion binding"/>
    <property type="evidence" value="ECO:0007669"/>
    <property type="project" value="InterPro"/>
</dbReference>
<dbReference type="GO" id="GO:0004129">
    <property type="term" value="F:cytochrome-c oxidase activity"/>
    <property type="evidence" value="ECO:0007669"/>
    <property type="project" value="UniProtKB-EC"/>
</dbReference>
<dbReference type="GO" id="GO:0042773">
    <property type="term" value="P:ATP synthesis coupled electron transport"/>
    <property type="evidence" value="ECO:0007669"/>
    <property type="project" value="TreeGrafter"/>
</dbReference>
<dbReference type="CDD" id="cd13912">
    <property type="entry name" value="CcO_II_C"/>
    <property type="match status" value="1"/>
</dbReference>
<dbReference type="FunFam" id="1.10.287.90:FF:000001">
    <property type="entry name" value="Cytochrome c oxidase subunit 2"/>
    <property type="match status" value="1"/>
</dbReference>
<dbReference type="FunFam" id="2.60.40.420:FF:000001">
    <property type="entry name" value="Cytochrome c oxidase subunit 2"/>
    <property type="match status" value="1"/>
</dbReference>
<dbReference type="Gene3D" id="1.10.287.90">
    <property type="match status" value="1"/>
</dbReference>
<dbReference type="Gene3D" id="2.60.40.420">
    <property type="entry name" value="Cupredoxins - blue copper proteins"/>
    <property type="match status" value="1"/>
</dbReference>
<dbReference type="InterPro" id="IPR045187">
    <property type="entry name" value="CcO_II"/>
</dbReference>
<dbReference type="InterPro" id="IPR002429">
    <property type="entry name" value="CcO_II-like_C"/>
</dbReference>
<dbReference type="InterPro" id="IPR034210">
    <property type="entry name" value="CcO_II_C"/>
</dbReference>
<dbReference type="InterPro" id="IPR001505">
    <property type="entry name" value="Copper_CuA"/>
</dbReference>
<dbReference type="InterPro" id="IPR008972">
    <property type="entry name" value="Cupredoxin"/>
</dbReference>
<dbReference type="InterPro" id="IPR014222">
    <property type="entry name" value="Cyt_c_oxidase_su2"/>
</dbReference>
<dbReference type="InterPro" id="IPR011759">
    <property type="entry name" value="Cyt_c_oxidase_su2_TM_dom"/>
</dbReference>
<dbReference type="InterPro" id="IPR036257">
    <property type="entry name" value="Cyt_c_oxidase_su2_TM_sf"/>
</dbReference>
<dbReference type="NCBIfam" id="TIGR02866">
    <property type="entry name" value="CoxB"/>
    <property type="match status" value="1"/>
</dbReference>
<dbReference type="PANTHER" id="PTHR22888:SF9">
    <property type="entry name" value="CYTOCHROME C OXIDASE SUBUNIT 2"/>
    <property type="match status" value="1"/>
</dbReference>
<dbReference type="PANTHER" id="PTHR22888">
    <property type="entry name" value="CYTOCHROME C OXIDASE, SUBUNIT II"/>
    <property type="match status" value="1"/>
</dbReference>
<dbReference type="Pfam" id="PF00116">
    <property type="entry name" value="COX2"/>
    <property type="match status" value="1"/>
</dbReference>
<dbReference type="Pfam" id="PF02790">
    <property type="entry name" value="COX2_TM"/>
    <property type="match status" value="1"/>
</dbReference>
<dbReference type="PRINTS" id="PR01166">
    <property type="entry name" value="CYCOXIDASEII"/>
</dbReference>
<dbReference type="SUPFAM" id="SSF49503">
    <property type="entry name" value="Cupredoxins"/>
    <property type="match status" value="1"/>
</dbReference>
<dbReference type="SUPFAM" id="SSF81464">
    <property type="entry name" value="Cytochrome c oxidase subunit II-like, transmembrane region"/>
    <property type="match status" value="1"/>
</dbReference>
<dbReference type="PROSITE" id="PS00078">
    <property type="entry name" value="COX2"/>
    <property type="match status" value="1"/>
</dbReference>
<dbReference type="PROSITE" id="PS50857">
    <property type="entry name" value="COX2_CUA"/>
    <property type="match status" value="1"/>
</dbReference>
<dbReference type="PROSITE" id="PS50999">
    <property type="entry name" value="COX2_TM"/>
    <property type="match status" value="1"/>
</dbReference>
<protein>
    <recommendedName>
        <fullName>Cytochrome c oxidase subunit 2</fullName>
        <ecNumber>7.1.1.9</ecNumber>
    </recommendedName>
    <alternativeName>
        <fullName>Cytochrome c oxidase polypeptide II</fullName>
    </alternativeName>
</protein>
<organism>
    <name type="scientific">Nyctereutes procyonoides</name>
    <name type="common">Raccoon dog</name>
    <name type="synonym">Canis procyonoides</name>
    <dbReference type="NCBI Taxonomy" id="34880"/>
    <lineage>
        <taxon>Eukaryota</taxon>
        <taxon>Metazoa</taxon>
        <taxon>Chordata</taxon>
        <taxon>Craniata</taxon>
        <taxon>Vertebrata</taxon>
        <taxon>Euteleostomi</taxon>
        <taxon>Mammalia</taxon>
        <taxon>Eutheria</taxon>
        <taxon>Laurasiatheria</taxon>
        <taxon>Carnivora</taxon>
        <taxon>Caniformia</taxon>
        <taxon>Canidae</taxon>
        <taxon>Nyctereutes</taxon>
    </lineage>
</organism>
<gene>
    <name type="primary">MT-CO2</name>
    <name type="synonym">COII</name>
    <name type="synonym">COX2</name>
    <name type="synonym">COXII</name>
    <name type="synonym">MTCO2</name>
</gene>
<accession>O47675</accession>
<reference key="1">
    <citation type="journal article" date="1997" name="Syst. Biol.">
        <title>Molecular systematics of the Canidae.</title>
        <authorList>
            <person name="Wayne R.K."/>
            <person name="Geffen E."/>
            <person name="Girman D.J."/>
            <person name="Koepfli K.-P."/>
            <person name="Lau L.M."/>
            <person name="Marshall C.R."/>
        </authorList>
    </citation>
    <scope>NUCLEOTIDE SEQUENCE [GENOMIC DNA]</scope>
</reference>
<evidence type="ECO:0000250" key="1">
    <source>
        <dbReference type="UniProtKB" id="P00403"/>
    </source>
</evidence>
<evidence type="ECO:0000250" key="2">
    <source>
        <dbReference type="UniProtKB" id="P00406"/>
    </source>
</evidence>
<evidence type="ECO:0000250" key="3">
    <source>
        <dbReference type="UniProtKB" id="P00410"/>
    </source>
</evidence>
<evidence type="ECO:0000250" key="4">
    <source>
        <dbReference type="UniProtKB" id="P68530"/>
    </source>
</evidence>
<evidence type="ECO:0000305" key="5"/>
<keyword id="KW-0186">Copper</keyword>
<keyword id="KW-0249">Electron transport</keyword>
<keyword id="KW-0460">Magnesium</keyword>
<keyword id="KW-0472">Membrane</keyword>
<keyword id="KW-0479">Metal-binding</keyword>
<keyword id="KW-0496">Mitochondrion</keyword>
<keyword id="KW-0999">Mitochondrion inner membrane</keyword>
<keyword id="KW-0597">Phosphoprotein</keyword>
<keyword id="KW-0679">Respiratory chain</keyword>
<keyword id="KW-1278">Translocase</keyword>
<keyword id="KW-0812">Transmembrane</keyword>
<keyword id="KW-1133">Transmembrane helix</keyword>
<keyword id="KW-0813">Transport</keyword>
<sequence>MAYPFQLGLQDATSPIMEELLHFHDHTLMIVFLISSLVLYIISLMLTTKLTHTSTMDAQEVETVWTILPAIILILIALLSLRILYMMDEINNPFLTMKTMGHQWYWSYEYTDYEDLNFDSYMIPTQELKPGELRLLEVDNRVILPMEMTVRMLISSEDVLHSWAVPSLGLKTDAIPGRLNQTTLMAMRPGLYYGQCSEICGSNHSFMPIVLEMVPLSYFETWSALMV</sequence>
<proteinExistence type="inferred from homology"/>
<geneLocation type="mitochondrion"/>
<name>COX2_NYCPR</name>
<comment type="function">
    <text evidence="3">Component of the cytochrome c oxidase, the last enzyme in the mitochondrial electron transport chain which drives oxidative phosphorylation. The respiratory chain contains 3 multisubunit complexes succinate dehydrogenase (complex II, CII), ubiquinol-cytochrome c oxidoreductase (cytochrome b-c1 complex, complex III, CIII) and cytochrome c oxidase (complex IV, CIV), that cooperate to transfer electrons derived from NADH and succinate to molecular oxygen, creating an electrochemical gradient over the inner membrane that drives transmembrane transport and the ATP synthase. Cytochrome c oxidase is the component of the respiratory chain that catalyzes the reduction of oxygen to water. Electrons originating from reduced cytochrome c in the intermembrane space (IMS) are transferred via the dinuclear copper A center (CU(A)) of subunit 2 and heme A of subunit 1 to the active site in subunit 1, a binuclear center (BNC) formed by heme A3 and copper B (CU(B)). The BNC reduces molecular oxygen to 2 water molecules using 4 electrons from cytochrome c in the IMS and 4 protons from the mitochondrial matrix.</text>
</comment>
<comment type="catalytic activity">
    <reaction evidence="3">
        <text>4 Fe(II)-[cytochrome c] + O2 + 8 H(+)(in) = 4 Fe(III)-[cytochrome c] + 2 H2O + 4 H(+)(out)</text>
        <dbReference type="Rhea" id="RHEA:11436"/>
        <dbReference type="Rhea" id="RHEA-COMP:10350"/>
        <dbReference type="Rhea" id="RHEA-COMP:14399"/>
        <dbReference type="ChEBI" id="CHEBI:15377"/>
        <dbReference type="ChEBI" id="CHEBI:15378"/>
        <dbReference type="ChEBI" id="CHEBI:15379"/>
        <dbReference type="ChEBI" id="CHEBI:29033"/>
        <dbReference type="ChEBI" id="CHEBI:29034"/>
        <dbReference type="EC" id="7.1.1.9"/>
    </reaction>
    <physiologicalReaction direction="left-to-right" evidence="3">
        <dbReference type="Rhea" id="RHEA:11437"/>
    </physiologicalReaction>
</comment>
<comment type="cofactor">
    <cofactor evidence="4">
        <name>Cu cation</name>
        <dbReference type="ChEBI" id="CHEBI:23378"/>
    </cofactor>
    <text evidence="4">Binds a dinuclear copper A center per subunit.</text>
</comment>
<comment type="subunit">
    <text evidence="1 4">Component of the cytochrome c oxidase (complex IV, CIV), a multisubunit enzyme composed of 14 subunits. The complex is composed of a catalytic core of 3 subunits MT-CO1, MT-CO2 and MT-CO3, encoded in the mitochondrial DNA, and 11 supernumerary subunits COX4I, COX5A, COX5B, COX6A, COX6B, COX6C, COX7A, COX7B, COX7C, COX8 and NDUFA4, which are encoded in the nuclear genome. The complex exists as a monomer or a dimer and forms supercomplexes (SCs) in the inner mitochondrial membrane with NADH-ubiquinone oxidoreductase (complex I, CI) and ubiquinol-cytochrome c oxidoreductase (cytochrome b-c1 complex, complex III, CIII), resulting in different assemblies (supercomplex SCI(1)III(2)IV(1) and megacomplex MCI(2)III(2)IV(2)) (By similarity). Found in a complex with TMEM177, COA6, COX18, COX20, SCO1 and SCO2. Interacts with TMEM177 in a COX20-dependent manner. Interacts with COX20. Interacts with COX16 (By similarity).</text>
</comment>
<comment type="subcellular location">
    <subcellularLocation>
        <location evidence="4">Mitochondrion inner membrane</location>
        <topology evidence="4">Multi-pass membrane protein</topology>
    </subcellularLocation>
</comment>
<comment type="similarity">
    <text evidence="5">Belongs to the cytochrome c oxidase subunit 2 family.</text>
</comment>